<proteinExistence type="inferred from homology"/>
<feature type="signal peptide" evidence="1">
    <location>
        <begin position="1"/>
        <end position="39"/>
    </location>
</feature>
<feature type="chain" id="PRO_0000427958" description="Alanine and proline-rich secreted protein Apa">
    <location>
        <begin position="40"/>
        <end position="325"/>
    </location>
</feature>
<feature type="repeat" description="1">
    <location>
        <begin position="85"/>
        <end position="88"/>
    </location>
</feature>
<feature type="repeat" description="2">
    <location>
        <begin position="94"/>
        <end position="97"/>
    </location>
</feature>
<feature type="repeat" description="3">
    <location>
        <begin position="104"/>
        <end position="107"/>
    </location>
</feature>
<feature type="region of interest" description="Disordered" evidence="2">
    <location>
        <begin position="38"/>
        <end position="110"/>
    </location>
</feature>
<feature type="region of interest" description="3 X 4 AA approximate repeats of [DA]-P-N-A">
    <location>
        <begin position="85"/>
        <end position="107"/>
    </location>
</feature>
<feature type="region of interest" description="Disordered" evidence="2">
    <location>
        <begin position="286"/>
        <end position="325"/>
    </location>
</feature>
<feature type="compositionally biased region" description="Low complexity" evidence="2">
    <location>
        <begin position="49"/>
        <end position="60"/>
    </location>
</feature>
<feature type="compositionally biased region" description="Pro residues" evidence="2">
    <location>
        <begin position="61"/>
        <end position="74"/>
    </location>
</feature>
<feature type="compositionally biased region" description="Low complexity" evidence="2">
    <location>
        <begin position="75"/>
        <end position="87"/>
    </location>
</feature>
<feature type="compositionally biased region" description="Pro residues" evidence="2">
    <location>
        <begin position="88"/>
        <end position="103"/>
    </location>
</feature>
<feature type="compositionally biased region" description="Pro residues" evidence="2">
    <location>
        <begin position="287"/>
        <end position="305"/>
    </location>
</feature>
<feature type="compositionally biased region" description="Low complexity" evidence="2">
    <location>
        <begin position="306"/>
        <end position="325"/>
    </location>
</feature>
<feature type="glycosylation site" description="O-linked (Man...) threonine" evidence="1">
    <location>
        <position position="49"/>
    </location>
</feature>
<feature type="glycosylation site" description="O-linked (Man...) threonine" evidence="1">
    <location>
        <position position="57"/>
    </location>
</feature>
<feature type="glycosylation site" description="O-linked (Man) threonine" evidence="1">
    <location>
        <position position="66"/>
    </location>
</feature>
<feature type="glycosylation site" description="O-linked (Man...) threonine" evidence="1">
    <location>
        <position position="316"/>
    </location>
</feature>
<protein>
    <recommendedName>
        <fullName>Alanine and proline-rich secreted protein Apa</fullName>
    </recommendedName>
    <alternativeName>
        <fullName>45 kDa glycoprotein</fullName>
    </alternativeName>
    <alternativeName>
        <fullName>45/47 kDa antigen</fullName>
    </alternativeName>
    <alternativeName>
        <fullName>Antigen MPT-32</fullName>
    </alternativeName>
    <alternativeName>
        <fullName>FAP-B</fullName>
    </alternativeName>
    <alternativeName>
        <fullName>Fibronectin attachment protein</fullName>
    </alternativeName>
    <alternativeName>
        <fullName>Immunogenic protein MPT32</fullName>
    </alternativeName>
</protein>
<reference key="1">
    <citation type="journal article" date="2002" name="J. Bacteriol.">
        <title>Whole-genome comparison of Mycobacterium tuberculosis clinical and laboratory strains.</title>
        <authorList>
            <person name="Fleischmann R.D."/>
            <person name="Alland D."/>
            <person name="Eisen J.A."/>
            <person name="Carpenter L."/>
            <person name="White O."/>
            <person name="Peterson J.D."/>
            <person name="DeBoy R.T."/>
            <person name="Dodson R.J."/>
            <person name="Gwinn M.L."/>
            <person name="Haft D.H."/>
            <person name="Hickey E.K."/>
            <person name="Kolonay J.F."/>
            <person name="Nelson W.C."/>
            <person name="Umayam L.A."/>
            <person name="Ermolaeva M.D."/>
            <person name="Salzberg S.L."/>
            <person name="Delcher A."/>
            <person name="Utterback T.R."/>
            <person name="Weidman J.F."/>
            <person name="Khouri H.M."/>
            <person name="Gill J."/>
            <person name="Mikula A."/>
            <person name="Bishai W."/>
            <person name="Jacobs W.R. Jr."/>
            <person name="Venter J.C."/>
            <person name="Fraser C.M."/>
        </authorList>
    </citation>
    <scope>NUCLEOTIDE SEQUENCE [LARGE SCALE GENOMIC DNA]</scope>
    <source>
        <strain>CDC 1551 / Oshkosh</strain>
    </source>
</reference>
<dbReference type="EMBL" id="AE000516">
    <property type="protein sequence ID" value="AAK46179.1"/>
    <property type="molecule type" value="Genomic_DNA"/>
</dbReference>
<dbReference type="PIR" id="D70666">
    <property type="entry name" value="D70666"/>
</dbReference>
<dbReference type="RefSeq" id="WP_003409337.1">
    <property type="nucleotide sequence ID" value="NZ_KK341227.1"/>
</dbReference>
<dbReference type="SMR" id="P9WIR6"/>
<dbReference type="GlyCosmos" id="P9WIR6">
    <property type="glycosylation" value="4 sites, No reported glycans"/>
</dbReference>
<dbReference type="GeneID" id="45425833"/>
<dbReference type="KEGG" id="mtc:MT1908"/>
<dbReference type="PATRIC" id="fig|83331.31.peg.2052"/>
<dbReference type="HOGENOM" id="CLU_064064_0_0_11"/>
<dbReference type="Proteomes" id="UP000001020">
    <property type="component" value="Chromosome"/>
</dbReference>
<dbReference type="GO" id="GO:0005576">
    <property type="term" value="C:extracellular region"/>
    <property type="evidence" value="ECO:0007669"/>
    <property type="project" value="UniProtKB-SubCell"/>
</dbReference>
<dbReference type="GO" id="GO:0050840">
    <property type="term" value="F:extracellular matrix binding"/>
    <property type="evidence" value="ECO:0007669"/>
    <property type="project" value="InterPro"/>
</dbReference>
<dbReference type="InterPro" id="IPR010801">
    <property type="entry name" value="FAP"/>
</dbReference>
<dbReference type="Pfam" id="PF07174">
    <property type="entry name" value="FAP"/>
    <property type="match status" value="1"/>
</dbReference>
<comment type="subcellular location">
    <subcellularLocation>
        <location evidence="1">Secreted</location>
    </subcellularLocation>
</comment>
<comment type="similarity">
    <text evidence="3">Belongs to the Apa family.</text>
</comment>
<sequence>MHQVDPNLTRRKGRLAALAIAAMASASLVTVAVPATANADPEPAPPVPTTAASPPSTAAAPPAPATPVAPPPPAAANTPNAQPGDPNAAPPPADPNAPPPPVIAPNAPQPVRIDNPVGGFSFALPAGWVESDAAHLDYGSALLSKTTGDPPFPGQPPPVANDTRIVLGRLDQKLYASAEATDSKAAARLGSDMGEFYMPYPGTRINQETVSLDANGVSGSASYYEVKFSDPSKPNGQIWTGVIGSPAANAPDAGPPQRWFVVWLGTANNPVDKGAAKALAESIRPLVAPPPAPAPAPAEPAPAPAPAGEVAPTPTTPTPQRTLPA</sequence>
<accession>P9WIR6</accession>
<accession>L0T9G7</accession>
<accession>O08062</accession>
<accession>Q50906</accession>
<gene>
    <name type="primary">apa</name>
    <name type="synonym">modD</name>
    <name type="ordered locus">MT1908</name>
</gene>
<evidence type="ECO:0000250" key="1"/>
<evidence type="ECO:0000256" key="2">
    <source>
        <dbReference type="SAM" id="MobiDB-lite"/>
    </source>
</evidence>
<evidence type="ECO:0000305" key="3"/>
<organism>
    <name type="scientific">Mycobacterium tuberculosis (strain CDC 1551 / Oshkosh)</name>
    <dbReference type="NCBI Taxonomy" id="83331"/>
    <lineage>
        <taxon>Bacteria</taxon>
        <taxon>Bacillati</taxon>
        <taxon>Actinomycetota</taxon>
        <taxon>Actinomycetes</taxon>
        <taxon>Mycobacteriales</taxon>
        <taxon>Mycobacteriaceae</taxon>
        <taxon>Mycobacterium</taxon>
        <taxon>Mycobacterium tuberculosis complex</taxon>
    </lineage>
</organism>
<keyword id="KW-0325">Glycoprotein</keyword>
<keyword id="KW-1185">Reference proteome</keyword>
<keyword id="KW-0677">Repeat</keyword>
<keyword id="KW-0964">Secreted</keyword>
<keyword id="KW-0732">Signal</keyword>
<name>APA_MYCTO</name>